<keyword id="KW-0025">Alternative splicing</keyword>
<keyword id="KW-0238">DNA-binding</keyword>
<keyword id="KW-1048">Host nucleus</keyword>
<keyword id="KW-0945">Host-virus interaction</keyword>
<keyword id="KW-1090">Inhibition of host innate immune response by virus</keyword>
<keyword id="KW-1185">Reference proteome</keyword>
<keyword id="KW-0832">Ubl conjugation</keyword>
<keyword id="KW-0899">Viral immunoevasion</keyword>
<dbReference type="EMBL" id="D13784">
    <property type="status" value="NOT_ANNOTATED_CDS"/>
    <property type="molecule type" value="Genomic_DNA"/>
</dbReference>
<dbReference type="EMBL" id="AF033817">
    <property type="status" value="NOT_ANNOTATED_CDS"/>
    <property type="molecule type" value="Genomic_DNA"/>
</dbReference>
<dbReference type="SMR" id="P0C745"/>
<dbReference type="IntAct" id="P0C745">
    <property type="interactions" value="1"/>
</dbReference>
<dbReference type="Proteomes" id="UP000001061">
    <property type="component" value="Segment"/>
</dbReference>
<dbReference type="Proteomes" id="UP000110593">
    <property type="component" value="Genome"/>
</dbReference>
<dbReference type="GO" id="GO:0042025">
    <property type="term" value="C:host cell nucleus"/>
    <property type="evidence" value="ECO:0007669"/>
    <property type="project" value="UniProtKB-SubCell"/>
</dbReference>
<dbReference type="GO" id="GO:0003677">
    <property type="term" value="F:DNA binding"/>
    <property type="evidence" value="ECO:0007669"/>
    <property type="project" value="UniProtKB-KW"/>
</dbReference>
<dbReference type="GO" id="GO:0052170">
    <property type="term" value="P:symbiont-mediated suppression of host innate immune response"/>
    <property type="evidence" value="ECO:0007669"/>
    <property type="project" value="UniProtKB-KW"/>
</dbReference>
<dbReference type="GO" id="GO:0085034">
    <property type="term" value="P:symbiont-mediated suppression of host NF-kappaB cascade"/>
    <property type="evidence" value="ECO:0000314"/>
    <property type="project" value="UniProtKB"/>
</dbReference>
<dbReference type="GO" id="GO:0016032">
    <property type="term" value="P:viral process"/>
    <property type="evidence" value="ECO:0007669"/>
    <property type="project" value="InterPro"/>
</dbReference>
<dbReference type="InterPro" id="IPR026220">
    <property type="entry name" value="HTLV1ZIPPER"/>
</dbReference>
<dbReference type="PRINTS" id="PR02097">
    <property type="entry name" value="HTLV1ZIPPER"/>
</dbReference>
<comment type="function">
    <text evidence="4 5 6 7 8 10">Enhances viral infectivity and persistence, and facilitates proliferation of HTLV-1-infected lymphocytes (PubMed:16424388). Mechanistically, inhibits Tax-mediated viral replication and NF-kappa-B activation (PubMed:18599479, PubMed:21552325). Plays a role in allowing infected T-cells to escape the cytotoxic T-lymphocyte response by maintaining low levels of viral protein production. Also inhibits host EP300 histone acetyltransferase (HAT) activity, reducing levels of acetylated histone H3 at 'Lys-18' (H3K18ac) in infected cells (PubMed:22434882). Contributes to the accumulation of chromosomal abnormalities by inhibiting double-stranded DNA breaks (DSB) repair through the NHEJ pathway (PubMed:29769340). Participates in the modulation of host immune response at multiple levels contributing to abnormal interferon signaling and viral pathogenesis (PubMed:28768861).</text>
</comment>
<comment type="subunit">
    <text evidence="2 5 7 8 9 10">Interacts with host ATF4; this interaction inhibits viral RNA transcriptional activation by preventing ATF4 binding to Tax-responsive elements. Interacts with host CREB1; this interaction inhibits host CREB1 transcriptional activity. Interacts with host JUN, JUNB and JUND (By similarity). Interacts with host EP300 and CREBBP; these interactions inhibit the association of the coactivators with the viral promoter (PubMed:18599479, PubMed:22434882). Interacts with host UBR5; this interaction regulates HBZ protein stability (PubMed:29441057). Interacts with XRCC5 and XRCC6 (PubMed:29769340). Interacts with IRF7 and IKBKE; this interaction modulates host interferon signaling (PubMed:28768861).</text>
</comment>
<comment type="interaction">
    <interactant intactId="EBI-16218595">
        <id>P0C745</id>
    </interactant>
    <interactant intactId="EBI-2873538">
        <id>Q8N1K5</id>
        <label>THEMIS</label>
    </interactant>
    <organismsDiffer>true</organismsDiffer>
    <experiments>3</experiments>
</comment>
<comment type="subcellular location">
    <subcellularLocation>
        <location evidence="7 8">Host nucleus</location>
    </subcellularLocation>
</comment>
<comment type="alternative products">
    <event type="alternative splicing"/>
    <isoform>
        <id>P0C745-1</id>
        <name>HBZ</name>
        <sequence type="displayed"/>
    </isoform>
    <isoform>
        <id>P0C745-2</id>
        <name>HBZ-SI</name>
        <sequence type="described" ref="VSP_037728"/>
    </isoform>
</comment>
<comment type="domain">
    <text>Contains three nuclear localization signals NLS-1 and NLS-2, corresponding to two regions rich in basic amino acids, and NLS-3 corresponding to its DNA-binding domain.</text>
</comment>
<comment type="PTM">
    <text evidence="9">Ubiquitinated by host E3 ligase UBR5 leading to HBZ degradation.</text>
</comment>
<comment type="miscellaneous">
    <text>Expressed from antisense transcripts. While mRNA expression levels of HBZ-SI were similar to those of HBZ, HBZ-SI seems slightly more expressed at the protein level ex vivo.</text>
</comment>
<comment type="similarity">
    <text evidence="11">Belongs to the HTLV-1 HBZ protein family.</text>
</comment>
<gene>
    <name type="primary">HBZ</name>
</gene>
<reference key="1">
    <citation type="journal article" date="1988" name="J. Gen. Virol.">
        <title>Molecular cloning and complete nucleotide sequence of an adult T cell leukaemia virus/human T cell leukaemia virus type I (ATLV/HTLV-I) isolate of Caribbean origin: relationship to other members of the ATLV/HTLV-I subgroup.</title>
        <authorList>
            <person name="Malik K.T.A."/>
            <person name="Even J."/>
            <person name="Karpas A."/>
        </authorList>
    </citation>
    <scope>NUCLEOTIDE SEQUENCE [GENOMIC DNA]</scope>
</reference>
<reference key="2">
    <citation type="submission" date="1997-11" db="EMBL/GenBank/DDBJ databases">
        <authorList>
            <person name="Chappey C."/>
        </authorList>
    </citation>
    <scope>NUCLEOTIDE SEQUENCE [GENOMIC DNA]</scope>
</reference>
<reference key="3">
    <citation type="journal article" date="2006" name="Blood">
        <title>Enhancement of infectivity and persistence in vivo by HBZ, a natural antisense coded protein of HTLV-1.</title>
        <authorList>
            <person name="Arnold J."/>
            <person name="Yamamoto B."/>
            <person name="Li M."/>
            <person name="Phipps A.J."/>
            <person name="Younis I."/>
            <person name="Lairmore M.D."/>
            <person name="Green P.L."/>
        </authorList>
    </citation>
    <scope>FUNCTION</scope>
</reference>
<reference key="4">
    <citation type="journal article" date="2008" name="J. Biol. Chem.">
        <title>An interaction between the human T cell leukemia virus type 1 basic leucine zipper factor (HBZ) and the KIX domain of p300/CBP contributes to the down-regulation of tax-dependent viral transcription by HBZ.</title>
        <authorList>
            <person name="Clerc I."/>
            <person name="Polakowski N."/>
            <person name="Andre-Arpin C."/>
            <person name="Cook P."/>
            <person name="Barbeau B."/>
            <person name="Mesnard J.M."/>
            <person name="Lemasson I."/>
        </authorList>
    </citation>
    <scope>FUNCTION</scope>
    <scope>INTERACTION WITH HOST EP300 AND CREBBP</scope>
</reference>
<reference key="5">
    <citation type="journal article" date="2011" name="PLoS Pathog.">
        <title>NF-kappaB hyper-activation by HTLV-1 tax induces cellular senescence, but can be alleviated by the viral anti-sense protein HBZ.</title>
        <authorList>
            <person name="Zhi H."/>
            <person name="Yang L."/>
            <person name="Kuo Y.L."/>
            <person name="Ho Y.K."/>
            <person name="Shih H.M."/>
            <person name="Giam C.Z."/>
        </authorList>
    </citation>
    <scope>FUNCTION</scope>
</reference>
<reference key="6">
    <citation type="journal article" date="2012" name="Nucleic Acids Res.">
        <title>The HTLV-1-encoded protein HBZ directly inhibits the acetyl transferase activity of p300/CBP.</title>
        <authorList>
            <person name="Wurm T."/>
            <person name="Wright D.G."/>
            <person name="Polakowski N."/>
            <person name="Mesnard J.M."/>
            <person name="Lemasson I."/>
        </authorList>
    </citation>
    <scope>FUNCTION</scope>
    <scope>SUBCELLULAR LOCATION</scope>
    <scope>INTERACTION WITH HOST EP300</scope>
</reference>
<reference key="7">
    <citation type="journal article" date="2017" name="J. Virol.">
        <title>Positive and Negative Regulation of Type I Interferons by the Human T Cell Leukemia Virus Antisense Protein HBZ.</title>
        <authorList>
            <person name="Narulla M.S."/>
            <person name="Alasiri A."/>
            <person name="Charmier L."/>
            <person name="Noonan S."/>
            <person name="Conroy D."/>
            <person name="Hall W.W."/>
            <person name="Sheehy N."/>
        </authorList>
    </citation>
    <scope>FUNCTION</scope>
    <scope>INTERACTION WITH HOST IRF7 AND IKBKE</scope>
    <scope>SUBCELLULAR LOCATION</scope>
</reference>
<reference key="8">
    <citation type="journal article" date="2018" name="Front. Microbiol.">
        <title>HTLV Deregulation of the NF-kappaB Pathway: An Update on Tax and Antisense Proteins Role.</title>
        <authorList>
            <person name="Fochi S."/>
            <person name="Mutascio S."/>
            <person name="Bertazzoni U."/>
            <person name="Zipeto D."/>
            <person name="Romanelli M.G."/>
        </authorList>
    </citation>
    <scope>REVIEW ON FUNCTION</scope>
</reference>
<reference key="9">
    <citation type="journal article" date="2018" name="Front. Microbiol.">
        <title>Stability of the HTLV-1 Antisense-Derived Protein, HBZ, Is Regulated by the E3 Ubiquitin-Protein Ligase, UBR5.</title>
        <authorList>
            <person name="Panfil A.R."/>
            <person name="Al-Saleem J."/>
            <person name="Howard C.M."/>
            <person name="Shkriabai N."/>
            <person name="Kvaratskhelia M."/>
            <person name="Green P.L."/>
        </authorList>
    </citation>
    <scope>INTERACTION WITH HOST UBR5</scope>
    <scope>UBIQUITINATION</scope>
</reference>
<reference key="10">
    <citation type="journal article" date="2018" name="J. Virol.">
        <title>non-homologous end joining (NHEJ).</title>
        <authorList>
            <person name="Rushing A.W."/>
            <person name="Hoang K."/>
            <person name="Polakowski N."/>
            <person name="Lemasson I."/>
        </authorList>
    </citation>
    <scope>FUNCTION</scope>
    <scope>INTERACTION WITH HOST XRCC5 AND XRCC6</scope>
</reference>
<accession>P0C745</accession>
<sequence length="209" mass="24936">MVNFVSVGLFRCLPVPCPEDLLVEELVDGLLSLEEELKDKEEEETVLDGLLSLEEESRGRLRRGPPGGKAPPRGETHRDRQRRAEEKRKRKKEREKEEEKQIAEYLKRKEEEKARRRKRAEEKAADFARRKQEEQERRERKWRQGAEKAKQHSARKEKMQELGVDGYTRQLEGEVESLEAERRRLLQEKEDLMGEVNYWQGRLEAMWLQ</sequence>
<organism>
    <name type="scientific">Human T-cell leukemia virus 1 (isolate Caribbea HS-35 subtype A)</name>
    <name type="common">HTLV-1</name>
    <dbReference type="NCBI Taxonomy" id="11927"/>
    <lineage>
        <taxon>Viruses</taxon>
        <taxon>Riboviria</taxon>
        <taxon>Pararnavirae</taxon>
        <taxon>Artverviricota</taxon>
        <taxon>Revtraviricetes</taxon>
        <taxon>Ortervirales</taxon>
        <taxon>Retroviridae</taxon>
        <taxon>Orthoretrovirinae</taxon>
        <taxon>Deltaretrovirus</taxon>
        <taxon>Primate T-lymphotropic virus 1</taxon>
    </lineage>
</organism>
<feature type="chain" id="PRO_0000379888" description="HTLV-1 basic zipper factor">
    <location>
        <begin position="1"/>
        <end position="209"/>
    </location>
</feature>
<feature type="region of interest" description="Disordered" evidence="3">
    <location>
        <begin position="41"/>
        <end position="165"/>
    </location>
</feature>
<feature type="short sequence motif" description="Nuclear localization signal 1" evidence="1">
    <location>
        <begin position="87"/>
        <end position="92"/>
    </location>
</feature>
<feature type="short sequence motif" description="Nuclear localization signal 2" evidence="1">
    <location>
        <begin position="116"/>
        <end position="120"/>
    </location>
</feature>
<feature type="short sequence motif" description="Nuclear localization signal 3" evidence="1">
    <location>
        <begin position="137"/>
        <end position="141"/>
    </location>
</feature>
<feature type="compositionally biased region" description="Basic and acidic residues" evidence="3">
    <location>
        <begin position="72"/>
        <end position="87"/>
    </location>
</feature>
<feature type="compositionally biased region" description="Basic and acidic residues" evidence="3">
    <location>
        <begin position="94"/>
        <end position="160"/>
    </location>
</feature>
<feature type="splice variant" id="VSP_037728" description="In isoform HBZ-SI." evidence="11">
    <original>MVNFVSV</original>
    <variation>MAAS</variation>
    <location>
        <begin position="1"/>
        <end position="7"/>
    </location>
</feature>
<evidence type="ECO:0000250" key="1"/>
<evidence type="ECO:0000250" key="2">
    <source>
        <dbReference type="UniProtKB" id="P0C746"/>
    </source>
</evidence>
<evidence type="ECO:0000256" key="3">
    <source>
        <dbReference type="SAM" id="MobiDB-lite"/>
    </source>
</evidence>
<evidence type="ECO:0000269" key="4">
    <source>
    </source>
</evidence>
<evidence type="ECO:0000269" key="5">
    <source>
    </source>
</evidence>
<evidence type="ECO:0000269" key="6">
    <source>
    </source>
</evidence>
<evidence type="ECO:0000269" key="7">
    <source>
    </source>
</evidence>
<evidence type="ECO:0000269" key="8">
    <source>
    </source>
</evidence>
<evidence type="ECO:0000269" key="9">
    <source>
    </source>
</evidence>
<evidence type="ECO:0000269" key="10">
    <source>
    </source>
</evidence>
<evidence type="ECO:0000305" key="11"/>
<organismHost>
    <name type="scientific">Homo sapiens</name>
    <name type="common">Human</name>
    <dbReference type="NCBI Taxonomy" id="9606"/>
</organismHost>
<name>HBZ_HTL1C</name>
<protein>
    <recommendedName>
        <fullName>HTLV-1 basic zipper factor</fullName>
        <shortName>HBZ</shortName>
    </recommendedName>
</protein>
<proteinExistence type="evidence at protein level"/>